<feature type="chain" id="PRO_0000242075" description="Arginine--tRNA ligase">
    <location>
        <begin position="1"/>
        <end position="595"/>
    </location>
</feature>
<feature type="short sequence motif" description="'HIGH' region">
    <location>
        <begin position="132"/>
        <end position="142"/>
    </location>
</feature>
<gene>
    <name evidence="1" type="primary">argS</name>
    <name type="ordered locus">Reut_A0127</name>
</gene>
<proteinExistence type="inferred from homology"/>
<protein>
    <recommendedName>
        <fullName evidence="1">Arginine--tRNA ligase</fullName>
        <ecNumber evidence="1">6.1.1.19</ecNumber>
    </recommendedName>
    <alternativeName>
        <fullName evidence="1">Arginyl-tRNA synthetase</fullName>
        <shortName evidence="1">ArgRS</shortName>
    </alternativeName>
</protein>
<sequence length="595" mass="64495">MLPVQTSNLAAAFTDAVRALAPADAALPAVTFERPKAAAHGDLACNIAMQVARALKSNPRELAQRIVAMVQADPRAAELVAGMEIAGPGFINLRLTPAAKADVLRAVLSEGDGYGAQERGMHGNVLVEFVSANPTGPLHVGHGRQAALGDALANLLSWQGYDVHREFYYNDAGVQIQNLAVSVQARTRGFKPGDANWPEAAYNGDYIGDIAADFLAGKTVSASDGEPVTASGNPEDLDSIRKFAVTYLRNEQDIDLQAFGVKFDHYYLESSLYTDGRVEAAVQGLVGKGKTYESEGALWLRTTDDGDDKDRVMKKTDGTYTYFVPDVAYHTTKWERGFTKVINVQGSDHHGTIARVRAGLQGLDIGIPKGYPDYVLHKMVTVMKNGEEVKISKRAGSYVTVRDLIEWSNGGDETIRGCLDAGVADWPEHFTRGRDAVRFFLLSRKADTEFVFDVDLALKQNDENPVYYVQYAHARICSIFESWGGADWESRLAELAGTDLAAVTGADASPQALALGQRLAEFPEMLAAAAGELAPHAVAFYLRDLAGDFHAFYNADRVLVDDEAVKRARLALLAATRQVLRNGLAVIGVSAPRRM</sequence>
<comment type="catalytic activity">
    <reaction evidence="1">
        <text>tRNA(Arg) + L-arginine + ATP = L-arginyl-tRNA(Arg) + AMP + diphosphate</text>
        <dbReference type="Rhea" id="RHEA:20301"/>
        <dbReference type="Rhea" id="RHEA-COMP:9658"/>
        <dbReference type="Rhea" id="RHEA-COMP:9673"/>
        <dbReference type="ChEBI" id="CHEBI:30616"/>
        <dbReference type="ChEBI" id="CHEBI:32682"/>
        <dbReference type="ChEBI" id="CHEBI:33019"/>
        <dbReference type="ChEBI" id="CHEBI:78442"/>
        <dbReference type="ChEBI" id="CHEBI:78513"/>
        <dbReference type="ChEBI" id="CHEBI:456215"/>
        <dbReference type="EC" id="6.1.1.19"/>
    </reaction>
</comment>
<comment type="subunit">
    <text evidence="1">Monomer.</text>
</comment>
<comment type="subcellular location">
    <subcellularLocation>
        <location evidence="1">Cytoplasm</location>
    </subcellularLocation>
</comment>
<comment type="similarity">
    <text evidence="1">Belongs to the class-I aminoacyl-tRNA synthetase family.</text>
</comment>
<reference key="1">
    <citation type="journal article" date="2010" name="PLoS ONE">
        <title>The complete multipartite genome sequence of Cupriavidus necator JMP134, a versatile pollutant degrader.</title>
        <authorList>
            <person name="Lykidis A."/>
            <person name="Perez-Pantoja D."/>
            <person name="Ledger T."/>
            <person name="Mavromatis K."/>
            <person name="Anderson I.J."/>
            <person name="Ivanova N.N."/>
            <person name="Hooper S.D."/>
            <person name="Lapidus A."/>
            <person name="Lucas S."/>
            <person name="Gonzalez B."/>
            <person name="Kyrpides N.C."/>
        </authorList>
    </citation>
    <scope>NUCLEOTIDE SEQUENCE [LARGE SCALE GENOMIC DNA]</scope>
    <source>
        <strain>JMP134 / LMG 1197</strain>
    </source>
</reference>
<evidence type="ECO:0000255" key="1">
    <source>
        <dbReference type="HAMAP-Rule" id="MF_00123"/>
    </source>
</evidence>
<dbReference type="EC" id="6.1.1.19" evidence="1"/>
<dbReference type="EMBL" id="CP000090">
    <property type="protein sequence ID" value="AAZ59509.1"/>
    <property type="molecule type" value="Genomic_DNA"/>
</dbReference>
<dbReference type="SMR" id="Q477C4"/>
<dbReference type="STRING" id="264198.Reut_A0127"/>
<dbReference type="KEGG" id="reu:Reut_A0127"/>
<dbReference type="eggNOG" id="COG0018">
    <property type="taxonomic scope" value="Bacteria"/>
</dbReference>
<dbReference type="HOGENOM" id="CLU_006406_0_1_4"/>
<dbReference type="OrthoDB" id="9803211at2"/>
<dbReference type="GO" id="GO:0005737">
    <property type="term" value="C:cytoplasm"/>
    <property type="evidence" value="ECO:0007669"/>
    <property type="project" value="UniProtKB-SubCell"/>
</dbReference>
<dbReference type="GO" id="GO:0004814">
    <property type="term" value="F:arginine-tRNA ligase activity"/>
    <property type="evidence" value="ECO:0007669"/>
    <property type="project" value="UniProtKB-UniRule"/>
</dbReference>
<dbReference type="GO" id="GO:0005524">
    <property type="term" value="F:ATP binding"/>
    <property type="evidence" value="ECO:0007669"/>
    <property type="project" value="UniProtKB-UniRule"/>
</dbReference>
<dbReference type="GO" id="GO:0006420">
    <property type="term" value="P:arginyl-tRNA aminoacylation"/>
    <property type="evidence" value="ECO:0007669"/>
    <property type="project" value="UniProtKB-UniRule"/>
</dbReference>
<dbReference type="CDD" id="cd07956">
    <property type="entry name" value="Anticodon_Ia_Arg"/>
    <property type="match status" value="1"/>
</dbReference>
<dbReference type="CDD" id="cd00671">
    <property type="entry name" value="ArgRS_core"/>
    <property type="match status" value="1"/>
</dbReference>
<dbReference type="FunFam" id="1.10.730.10:FF:000008">
    <property type="entry name" value="Arginine--tRNA ligase"/>
    <property type="match status" value="1"/>
</dbReference>
<dbReference type="FunFam" id="3.40.50.620:FF:000062">
    <property type="entry name" value="Arginine--tRNA ligase"/>
    <property type="match status" value="1"/>
</dbReference>
<dbReference type="Gene3D" id="3.30.1360.70">
    <property type="entry name" value="Arginyl tRNA synthetase N-terminal domain"/>
    <property type="match status" value="1"/>
</dbReference>
<dbReference type="Gene3D" id="3.40.50.620">
    <property type="entry name" value="HUPs"/>
    <property type="match status" value="1"/>
</dbReference>
<dbReference type="Gene3D" id="1.10.730.10">
    <property type="entry name" value="Isoleucyl-tRNA Synthetase, Domain 1"/>
    <property type="match status" value="1"/>
</dbReference>
<dbReference type="HAMAP" id="MF_00123">
    <property type="entry name" value="Arg_tRNA_synth"/>
    <property type="match status" value="1"/>
</dbReference>
<dbReference type="InterPro" id="IPR001412">
    <property type="entry name" value="aa-tRNA-synth_I_CS"/>
</dbReference>
<dbReference type="InterPro" id="IPR001278">
    <property type="entry name" value="Arg-tRNA-ligase"/>
</dbReference>
<dbReference type="InterPro" id="IPR005148">
    <property type="entry name" value="Arg-tRNA-synth_N"/>
</dbReference>
<dbReference type="InterPro" id="IPR036695">
    <property type="entry name" value="Arg-tRNA-synth_N_sf"/>
</dbReference>
<dbReference type="InterPro" id="IPR035684">
    <property type="entry name" value="ArgRS_core"/>
</dbReference>
<dbReference type="InterPro" id="IPR008909">
    <property type="entry name" value="DALR_anticod-bd"/>
</dbReference>
<dbReference type="InterPro" id="IPR014729">
    <property type="entry name" value="Rossmann-like_a/b/a_fold"/>
</dbReference>
<dbReference type="InterPro" id="IPR009080">
    <property type="entry name" value="tRNAsynth_Ia_anticodon-bd"/>
</dbReference>
<dbReference type="NCBIfam" id="TIGR00456">
    <property type="entry name" value="argS"/>
    <property type="match status" value="1"/>
</dbReference>
<dbReference type="PANTHER" id="PTHR11956:SF5">
    <property type="entry name" value="ARGININE--TRNA LIGASE, CYTOPLASMIC"/>
    <property type="match status" value="1"/>
</dbReference>
<dbReference type="PANTHER" id="PTHR11956">
    <property type="entry name" value="ARGINYL-TRNA SYNTHETASE"/>
    <property type="match status" value="1"/>
</dbReference>
<dbReference type="Pfam" id="PF03485">
    <property type="entry name" value="Arg_tRNA_synt_N"/>
    <property type="match status" value="1"/>
</dbReference>
<dbReference type="Pfam" id="PF05746">
    <property type="entry name" value="DALR_1"/>
    <property type="match status" value="1"/>
</dbReference>
<dbReference type="Pfam" id="PF00750">
    <property type="entry name" value="tRNA-synt_1d"/>
    <property type="match status" value="1"/>
</dbReference>
<dbReference type="PRINTS" id="PR01038">
    <property type="entry name" value="TRNASYNTHARG"/>
</dbReference>
<dbReference type="SMART" id="SM01016">
    <property type="entry name" value="Arg_tRNA_synt_N"/>
    <property type="match status" value="1"/>
</dbReference>
<dbReference type="SMART" id="SM00836">
    <property type="entry name" value="DALR_1"/>
    <property type="match status" value="1"/>
</dbReference>
<dbReference type="SUPFAM" id="SSF47323">
    <property type="entry name" value="Anticodon-binding domain of a subclass of class I aminoacyl-tRNA synthetases"/>
    <property type="match status" value="1"/>
</dbReference>
<dbReference type="SUPFAM" id="SSF55190">
    <property type="entry name" value="Arginyl-tRNA synthetase (ArgRS), N-terminal 'additional' domain"/>
    <property type="match status" value="1"/>
</dbReference>
<dbReference type="SUPFAM" id="SSF52374">
    <property type="entry name" value="Nucleotidylyl transferase"/>
    <property type="match status" value="1"/>
</dbReference>
<dbReference type="PROSITE" id="PS00178">
    <property type="entry name" value="AA_TRNA_LIGASE_I"/>
    <property type="match status" value="1"/>
</dbReference>
<keyword id="KW-0030">Aminoacyl-tRNA synthetase</keyword>
<keyword id="KW-0067">ATP-binding</keyword>
<keyword id="KW-0963">Cytoplasm</keyword>
<keyword id="KW-0436">Ligase</keyword>
<keyword id="KW-0547">Nucleotide-binding</keyword>
<keyword id="KW-0648">Protein biosynthesis</keyword>
<name>SYR_CUPPJ</name>
<accession>Q477C4</accession>
<organism>
    <name type="scientific">Cupriavidus pinatubonensis (strain JMP 134 / LMG 1197)</name>
    <name type="common">Cupriavidus necator (strain JMP 134)</name>
    <dbReference type="NCBI Taxonomy" id="264198"/>
    <lineage>
        <taxon>Bacteria</taxon>
        <taxon>Pseudomonadati</taxon>
        <taxon>Pseudomonadota</taxon>
        <taxon>Betaproteobacteria</taxon>
        <taxon>Burkholderiales</taxon>
        <taxon>Burkholderiaceae</taxon>
        <taxon>Cupriavidus</taxon>
    </lineage>
</organism>